<evidence type="ECO:0000250" key="1"/>
<evidence type="ECO:0000255" key="2"/>
<evidence type="ECO:0000255" key="3">
    <source>
        <dbReference type="PROSITE-ProRule" id="PRU01058"/>
    </source>
</evidence>
<evidence type="ECO:0000256" key="4">
    <source>
        <dbReference type="SAM" id="MobiDB-lite"/>
    </source>
</evidence>
<protein>
    <recommendedName>
        <fullName>Genetic interactor of prohibitins 3, mitochondrial</fullName>
    </recommendedName>
    <alternativeName>
        <fullName>Found in mitochondrial proteome protein 38</fullName>
    </alternativeName>
</protein>
<comment type="function">
    <text evidence="1">May be involved in the mitochondrial lipid metabolism.</text>
</comment>
<comment type="subcellular location">
    <subcellularLocation>
        <location evidence="1">Mitochondrion</location>
    </subcellularLocation>
</comment>
<comment type="similarity">
    <text evidence="3">Belongs to the TRAFAC class YlqF/YawG GTPase family. GEP3 subfamily.</text>
</comment>
<organism>
    <name type="scientific">Meyerozyma guilliermondii (strain ATCC 6260 / CBS 566 / DSM 6381 / JCM 1539 / NBRC 10279 / NRRL Y-324)</name>
    <name type="common">Yeast</name>
    <name type="synonym">Candida guilliermondii</name>
    <dbReference type="NCBI Taxonomy" id="294746"/>
    <lineage>
        <taxon>Eukaryota</taxon>
        <taxon>Fungi</taxon>
        <taxon>Dikarya</taxon>
        <taxon>Ascomycota</taxon>
        <taxon>Saccharomycotina</taxon>
        <taxon>Pichiomycetes</taxon>
        <taxon>Debaryomycetaceae</taxon>
        <taxon>Meyerozyma</taxon>
    </lineage>
</organism>
<dbReference type="EMBL" id="CH408156">
    <property type="protein sequence ID" value="EDK37316.2"/>
    <property type="molecule type" value="Genomic_DNA"/>
</dbReference>
<dbReference type="RefSeq" id="XP_001485743.1">
    <property type="nucleotide sequence ID" value="XM_001485693.1"/>
</dbReference>
<dbReference type="SMR" id="A5DDR3"/>
<dbReference type="FunCoup" id="A5DDR3">
    <property type="interactions" value="85"/>
</dbReference>
<dbReference type="STRING" id="294746.A5DDR3"/>
<dbReference type="GeneID" id="5128328"/>
<dbReference type="KEGG" id="pgu:PGUG_01414"/>
<dbReference type="eggNOG" id="ENOG502S0UP">
    <property type="taxonomic scope" value="Eukaryota"/>
</dbReference>
<dbReference type="HOGENOM" id="CLU_025792_0_0_1"/>
<dbReference type="InParanoid" id="A5DDR3"/>
<dbReference type="OMA" id="IIPPFYG"/>
<dbReference type="OrthoDB" id="1696305at2759"/>
<dbReference type="Proteomes" id="UP000001997">
    <property type="component" value="Unassembled WGS sequence"/>
</dbReference>
<dbReference type="GO" id="GO:0005739">
    <property type="term" value="C:mitochondrion"/>
    <property type="evidence" value="ECO:0007669"/>
    <property type="project" value="UniProtKB-SubCell"/>
</dbReference>
<dbReference type="GO" id="GO:0005525">
    <property type="term" value="F:GTP binding"/>
    <property type="evidence" value="ECO:0007669"/>
    <property type="project" value="InterPro"/>
</dbReference>
<dbReference type="Gene3D" id="3.40.50.300">
    <property type="entry name" value="P-loop containing nucleotide triphosphate hydrolases"/>
    <property type="match status" value="1"/>
</dbReference>
<dbReference type="InterPro" id="IPR030378">
    <property type="entry name" value="G_CP_dom"/>
</dbReference>
<dbReference type="InterPro" id="IPR050896">
    <property type="entry name" value="Mito_lipid_metab_GTPase"/>
</dbReference>
<dbReference type="InterPro" id="IPR027417">
    <property type="entry name" value="P-loop_NTPase"/>
</dbReference>
<dbReference type="PANTHER" id="PTHR46434">
    <property type="entry name" value="GENETIC INTERACTOR OF PROHIBITINS 3, MITOCHONDRIAL"/>
    <property type="match status" value="1"/>
</dbReference>
<dbReference type="PANTHER" id="PTHR46434:SF1">
    <property type="entry name" value="GENETIC INTERACTOR OF PROHIBITINS 3, MITOCHONDRIAL"/>
    <property type="match status" value="1"/>
</dbReference>
<dbReference type="SUPFAM" id="SSF52540">
    <property type="entry name" value="P-loop containing nucleoside triphosphate hydrolases"/>
    <property type="match status" value="1"/>
</dbReference>
<dbReference type="PROSITE" id="PS51721">
    <property type="entry name" value="G_CP"/>
    <property type="match status" value="1"/>
</dbReference>
<keyword id="KW-0496">Mitochondrion</keyword>
<keyword id="KW-1185">Reference proteome</keyword>
<keyword id="KW-0809">Transit peptide</keyword>
<gene>
    <name type="primary">GEP3</name>
    <name type="synonym">FMP48</name>
    <name type="ORF">PGUG_01414</name>
</gene>
<sequence length="599" mass="67005">MLSLRRSIWIAACKRVSSFRTTIPIKSLHTNSQPVLSLRNVKFRPYSTIPLLQSLVPTCNSCGITLQKTDPDRPGFYREPGTGQKLVRKENLVASNAYNGLDDDDLKLLLNSSGEEKDISLFKQRNEPSPKVAPQSIQCIRCREAQFRSEYSQDEFPIESLDAIMTSLPPDAKLVYVISAADFPMSLDSRVFSYRSALEILFVITKCDLLFPTLNLANKYGLPFFQDYFYRKHGVSGENVVLTSGKIDWNIPTLLKNGKIRDNSYLIGSVNSGKSTLLKSMLSVSNKLAAKKQHLSSRERVKLEKEQDRLINSGASTPSDIRALRRKNEQEKNRTGPGASYMPGYTRGTIPYDVDGITMHDVPGFGENVDSNEFASLFSYLQPSQMKQLSKGVPIHKYGTYKSPFETIKGGQCYTVGGIFYMVPPPGTMVQARNCINHKAHIFSNVDKAKASLEAVANEDENGAHAGLRNVFIMPGSALKKLVPRYIPAFYGAIDLVVAGAGHVNLTPTGAPTPTDEPWIVWVPQGVRIWVRQPITRYITRTLAGRDAKGNPLRKELWKQKSVTHVERYTGKTPFYTRLSANPDNTMATKDNRYPAWYE</sequence>
<name>GEP3_PICGU</name>
<proteinExistence type="inferred from homology"/>
<accession>A5DDR3</accession>
<feature type="transit peptide" description="Mitochondrion" evidence="2">
    <location>
        <begin position="1"/>
        <end position="46"/>
    </location>
</feature>
<feature type="chain" id="PRO_0000409638" description="Genetic interactor of prohibitins 3, mitochondrial">
    <location>
        <begin position="47"/>
        <end position="599"/>
    </location>
</feature>
<feature type="domain" description="CP-type G" evidence="3">
    <location>
        <begin position="158"/>
        <end position="368"/>
    </location>
</feature>
<feature type="region of interest" description="Disordered" evidence="4">
    <location>
        <begin position="312"/>
        <end position="342"/>
    </location>
</feature>
<feature type="compositionally biased region" description="Basic and acidic residues" evidence="4">
    <location>
        <begin position="322"/>
        <end position="334"/>
    </location>
</feature>
<reference key="1">
    <citation type="journal article" date="2009" name="Nature">
        <title>Evolution of pathogenicity and sexual reproduction in eight Candida genomes.</title>
        <authorList>
            <person name="Butler G."/>
            <person name="Rasmussen M.D."/>
            <person name="Lin M.F."/>
            <person name="Santos M.A.S."/>
            <person name="Sakthikumar S."/>
            <person name="Munro C.A."/>
            <person name="Rheinbay E."/>
            <person name="Grabherr M."/>
            <person name="Forche A."/>
            <person name="Reedy J.L."/>
            <person name="Agrafioti I."/>
            <person name="Arnaud M.B."/>
            <person name="Bates S."/>
            <person name="Brown A.J.P."/>
            <person name="Brunke S."/>
            <person name="Costanzo M.C."/>
            <person name="Fitzpatrick D.A."/>
            <person name="de Groot P.W.J."/>
            <person name="Harris D."/>
            <person name="Hoyer L.L."/>
            <person name="Hube B."/>
            <person name="Klis F.M."/>
            <person name="Kodira C."/>
            <person name="Lennard N."/>
            <person name="Logue M.E."/>
            <person name="Martin R."/>
            <person name="Neiman A.M."/>
            <person name="Nikolaou E."/>
            <person name="Quail M.A."/>
            <person name="Quinn J."/>
            <person name="Santos M.C."/>
            <person name="Schmitzberger F.F."/>
            <person name="Sherlock G."/>
            <person name="Shah P."/>
            <person name="Silverstein K.A.T."/>
            <person name="Skrzypek M.S."/>
            <person name="Soll D."/>
            <person name="Staggs R."/>
            <person name="Stansfield I."/>
            <person name="Stumpf M.P.H."/>
            <person name="Sudbery P.E."/>
            <person name="Srikantha T."/>
            <person name="Zeng Q."/>
            <person name="Berman J."/>
            <person name="Berriman M."/>
            <person name="Heitman J."/>
            <person name="Gow N.A.R."/>
            <person name="Lorenz M.C."/>
            <person name="Birren B.W."/>
            <person name="Kellis M."/>
            <person name="Cuomo C.A."/>
        </authorList>
    </citation>
    <scope>NUCLEOTIDE SEQUENCE [LARGE SCALE GENOMIC DNA]</scope>
    <source>
        <strain>ATCC 6260 / CBS 566 / DSM 6381 / JCM 1539 / NBRC 10279 / NRRL Y-324</strain>
    </source>
</reference>